<sequence length="601" mass="66479">MEGSDFLLAGVLFLFAAVAAVPLASRLGIGAVLGYLLAGIAIGPWGLGFISDVDEILHFSELGVVFLMFIIGLELNPSKLWQLRRSIFGVGAAQVLLSSALLAGLLMLTHFSWQAAVVGGIGLAMSSTAMALQLMREKGMNRSESGQLGFSVLLFQDLAVIPALALVPLLAGSADEHFDWMKIGMKVLAFVGMLIGGRYLLRPVFRFIAASGVREVFTAATLLLVLGSALFMDALGLSMALGTFIAGVLLAESEYRHELETAIDPFKGLLLGLFFISVGMSLNLGVLYTHLLWVVISVVVLVAVKILVLYLLARLYGVRSSERMQFAGVLSQGGEFAFVLFSTASSQRLFQGDQMALLLVTVTLSMMTTPLLMKLVDKWLSRQFNGPEEEDEKPWVNDDKPQVIVVGFGRFGQVIGRLLMANKMRITVLERDISAVNLMRKYGYKVYYGDATQVDLLRSAGAEAAESIVITCNEPEDTMKLVEICQQHFPHLHILARARGRVEAHELLQAGVTQFSRETFSSALELGRKTLVTLGMHPHQAQRAQLHFRRLDMRMLRELIPMHADTVQISRAREARRELEEIFQREMQQERRQLDGWDEFE</sequence>
<comment type="function">
    <text evidence="1">Pore-forming subunit of a potassium efflux system that confers protection against electrophiles. Catalyzes K(+)/H(+) antiport.</text>
</comment>
<comment type="subunit">
    <text evidence="1">Interacts with the regulatory subunit KefG.</text>
</comment>
<comment type="subcellular location">
    <subcellularLocation>
        <location evidence="1">Cell inner membrane</location>
        <topology evidence="1">Multi-pass membrane protein</topology>
    </subcellularLocation>
</comment>
<comment type="similarity">
    <text evidence="1">Belongs to the monovalent cation:proton antiporter 2 (CPA2) transporter (TC 2.A.37) family. KefB subfamily.</text>
</comment>
<organism>
    <name type="scientific">Escherichia coli O81 (strain ED1a)</name>
    <dbReference type="NCBI Taxonomy" id="585397"/>
    <lineage>
        <taxon>Bacteria</taxon>
        <taxon>Pseudomonadati</taxon>
        <taxon>Pseudomonadota</taxon>
        <taxon>Gammaproteobacteria</taxon>
        <taxon>Enterobacterales</taxon>
        <taxon>Enterobacteriaceae</taxon>
        <taxon>Escherichia</taxon>
    </lineage>
</organism>
<keyword id="KW-0050">Antiport</keyword>
<keyword id="KW-0997">Cell inner membrane</keyword>
<keyword id="KW-1003">Cell membrane</keyword>
<keyword id="KW-0406">Ion transport</keyword>
<keyword id="KW-0472">Membrane</keyword>
<keyword id="KW-0630">Potassium</keyword>
<keyword id="KW-0633">Potassium transport</keyword>
<keyword id="KW-0812">Transmembrane</keyword>
<keyword id="KW-1133">Transmembrane helix</keyword>
<keyword id="KW-0813">Transport</keyword>
<evidence type="ECO:0000255" key="1">
    <source>
        <dbReference type="HAMAP-Rule" id="MF_01412"/>
    </source>
</evidence>
<evidence type="ECO:0000255" key="2">
    <source>
        <dbReference type="PROSITE-ProRule" id="PRU00543"/>
    </source>
</evidence>
<name>KEFB_ECO81</name>
<protein>
    <recommendedName>
        <fullName evidence="1">Glutathione-regulated potassium-efflux system protein KefB</fullName>
    </recommendedName>
    <alternativeName>
        <fullName evidence="1">K(+)/H(+) antiporter</fullName>
    </alternativeName>
</protein>
<dbReference type="EMBL" id="CU928162">
    <property type="protein sequence ID" value="CAR10150.2"/>
    <property type="molecule type" value="Genomic_DNA"/>
</dbReference>
<dbReference type="RefSeq" id="WP_000399166.1">
    <property type="nucleotide sequence ID" value="NC_011745.1"/>
</dbReference>
<dbReference type="SMR" id="B7N1D2"/>
<dbReference type="KEGG" id="ecq:ECED1_4012"/>
<dbReference type="HOGENOM" id="CLU_005126_9_3_6"/>
<dbReference type="Proteomes" id="UP000000748">
    <property type="component" value="Chromosome"/>
</dbReference>
<dbReference type="GO" id="GO:0005886">
    <property type="term" value="C:plasma membrane"/>
    <property type="evidence" value="ECO:0007669"/>
    <property type="project" value="UniProtKB-SubCell"/>
</dbReference>
<dbReference type="GO" id="GO:0015503">
    <property type="term" value="F:glutathione-regulated potassium exporter activity"/>
    <property type="evidence" value="ECO:0007669"/>
    <property type="project" value="UniProtKB-UniRule"/>
</dbReference>
<dbReference type="GO" id="GO:1902600">
    <property type="term" value="P:proton transmembrane transport"/>
    <property type="evidence" value="ECO:0007669"/>
    <property type="project" value="InterPro"/>
</dbReference>
<dbReference type="FunFam" id="1.20.1530.20:FF:000001">
    <property type="entry name" value="Glutathione-regulated potassium-efflux system protein KefB"/>
    <property type="match status" value="1"/>
</dbReference>
<dbReference type="FunFam" id="3.40.50.720:FF:000036">
    <property type="entry name" value="Glutathione-regulated potassium-efflux system protein KefB"/>
    <property type="match status" value="1"/>
</dbReference>
<dbReference type="Gene3D" id="1.20.1530.20">
    <property type="match status" value="1"/>
</dbReference>
<dbReference type="Gene3D" id="3.40.50.720">
    <property type="entry name" value="NAD(P)-binding Rossmann-like Domain"/>
    <property type="match status" value="1"/>
</dbReference>
<dbReference type="HAMAP" id="MF_01412">
    <property type="entry name" value="K_H_efflux_KefB"/>
    <property type="match status" value="1"/>
</dbReference>
<dbReference type="InterPro" id="IPR006153">
    <property type="entry name" value="Cation/H_exchanger_TM"/>
</dbReference>
<dbReference type="InterPro" id="IPR004771">
    <property type="entry name" value="K/H_exchanger"/>
</dbReference>
<dbReference type="InterPro" id="IPR020884">
    <property type="entry name" value="K_H_efflux_KefB"/>
</dbReference>
<dbReference type="InterPro" id="IPR038770">
    <property type="entry name" value="Na+/solute_symporter_sf"/>
</dbReference>
<dbReference type="InterPro" id="IPR036291">
    <property type="entry name" value="NAD(P)-bd_dom_sf"/>
</dbReference>
<dbReference type="InterPro" id="IPR003148">
    <property type="entry name" value="RCK_N"/>
</dbReference>
<dbReference type="NCBIfam" id="TIGR00932">
    <property type="entry name" value="2a37"/>
    <property type="match status" value="1"/>
</dbReference>
<dbReference type="NCBIfam" id="NF002973">
    <property type="entry name" value="PRK03659.1"/>
    <property type="match status" value="1"/>
</dbReference>
<dbReference type="PANTHER" id="PTHR46157">
    <property type="entry name" value="K(+) EFFLUX ANTIPORTER 3, CHLOROPLASTIC"/>
    <property type="match status" value="1"/>
</dbReference>
<dbReference type="PANTHER" id="PTHR46157:SF4">
    <property type="entry name" value="K(+) EFFLUX ANTIPORTER 3, CHLOROPLASTIC"/>
    <property type="match status" value="1"/>
</dbReference>
<dbReference type="Pfam" id="PF00999">
    <property type="entry name" value="Na_H_Exchanger"/>
    <property type="match status" value="1"/>
</dbReference>
<dbReference type="Pfam" id="PF02254">
    <property type="entry name" value="TrkA_N"/>
    <property type="match status" value="1"/>
</dbReference>
<dbReference type="SUPFAM" id="SSF51735">
    <property type="entry name" value="NAD(P)-binding Rossmann-fold domains"/>
    <property type="match status" value="1"/>
</dbReference>
<dbReference type="PROSITE" id="PS51201">
    <property type="entry name" value="RCK_N"/>
    <property type="match status" value="1"/>
</dbReference>
<feature type="chain" id="PRO_1000184613" description="Glutathione-regulated potassium-efflux system protein KefB">
    <location>
        <begin position="1"/>
        <end position="601"/>
    </location>
</feature>
<feature type="transmembrane region" description="Helical" evidence="1">
    <location>
        <begin position="4"/>
        <end position="24"/>
    </location>
</feature>
<feature type="transmembrane region" description="Helical" evidence="1">
    <location>
        <begin position="29"/>
        <end position="49"/>
    </location>
</feature>
<feature type="transmembrane region" description="Helical" evidence="1">
    <location>
        <begin position="55"/>
        <end position="75"/>
    </location>
</feature>
<feature type="transmembrane region" description="Helical" evidence="1">
    <location>
        <begin position="87"/>
        <end position="107"/>
    </location>
</feature>
<feature type="transmembrane region" description="Helical" evidence="1">
    <location>
        <begin position="115"/>
        <end position="135"/>
    </location>
</feature>
<feature type="transmembrane region" description="Helical" evidence="1">
    <location>
        <begin position="152"/>
        <end position="172"/>
    </location>
</feature>
<feature type="transmembrane region" description="Helical" evidence="1">
    <location>
        <begin position="177"/>
        <end position="197"/>
    </location>
</feature>
<feature type="transmembrane region" description="Helical" evidence="1">
    <location>
        <begin position="207"/>
        <end position="227"/>
    </location>
</feature>
<feature type="transmembrane region" description="Helical" evidence="1">
    <location>
        <begin position="230"/>
        <end position="250"/>
    </location>
</feature>
<feature type="transmembrane region" description="Helical" evidence="1">
    <location>
        <begin position="268"/>
        <end position="288"/>
    </location>
</feature>
<feature type="transmembrane region" description="Helical" evidence="1">
    <location>
        <begin position="291"/>
        <end position="311"/>
    </location>
</feature>
<feature type="transmembrane region" description="Helical" evidence="1">
    <location>
        <begin position="324"/>
        <end position="344"/>
    </location>
</feature>
<feature type="transmembrane region" description="Helical" evidence="1">
    <location>
        <begin position="356"/>
        <end position="376"/>
    </location>
</feature>
<feature type="domain" description="RCK N-terminal" evidence="2">
    <location>
        <begin position="400"/>
        <end position="519"/>
    </location>
</feature>
<gene>
    <name evidence="1" type="primary">kefB</name>
    <name type="ordered locus">ECED1_4012</name>
</gene>
<accession>B7N1D2</accession>
<proteinExistence type="inferred from homology"/>
<reference key="1">
    <citation type="journal article" date="2009" name="PLoS Genet.">
        <title>Organised genome dynamics in the Escherichia coli species results in highly diverse adaptive paths.</title>
        <authorList>
            <person name="Touchon M."/>
            <person name="Hoede C."/>
            <person name="Tenaillon O."/>
            <person name="Barbe V."/>
            <person name="Baeriswyl S."/>
            <person name="Bidet P."/>
            <person name="Bingen E."/>
            <person name="Bonacorsi S."/>
            <person name="Bouchier C."/>
            <person name="Bouvet O."/>
            <person name="Calteau A."/>
            <person name="Chiapello H."/>
            <person name="Clermont O."/>
            <person name="Cruveiller S."/>
            <person name="Danchin A."/>
            <person name="Diard M."/>
            <person name="Dossat C."/>
            <person name="Karoui M.E."/>
            <person name="Frapy E."/>
            <person name="Garry L."/>
            <person name="Ghigo J.M."/>
            <person name="Gilles A.M."/>
            <person name="Johnson J."/>
            <person name="Le Bouguenec C."/>
            <person name="Lescat M."/>
            <person name="Mangenot S."/>
            <person name="Martinez-Jehanne V."/>
            <person name="Matic I."/>
            <person name="Nassif X."/>
            <person name="Oztas S."/>
            <person name="Petit M.A."/>
            <person name="Pichon C."/>
            <person name="Rouy Z."/>
            <person name="Ruf C.S."/>
            <person name="Schneider D."/>
            <person name="Tourret J."/>
            <person name="Vacherie B."/>
            <person name="Vallenet D."/>
            <person name="Medigue C."/>
            <person name="Rocha E.P.C."/>
            <person name="Denamur E."/>
        </authorList>
    </citation>
    <scope>NUCLEOTIDE SEQUENCE [LARGE SCALE GENOMIC DNA]</scope>
    <source>
        <strain>ED1a</strain>
    </source>
</reference>